<feature type="signal peptide" evidence="2">
    <location>
        <begin position="1"/>
        <end position="24"/>
    </location>
</feature>
<feature type="chain" id="PRO_0000034022" description="Thaumatin-like protein 1" evidence="2">
    <location>
        <begin position="25"/>
        <end position="246"/>
    </location>
</feature>
<feature type="disulfide bond" evidence="1 3">
    <location>
        <begin position="33"/>
        <end position="245"/>
    </location>
</feature>
<feature type="disulfide bond" evidence="1 3">
    <location>
        <begin position="81"/>
        <end position="91"/>
    </location>
</feature>
<feature type="disulfide bond" evidence="1 3">
    <location>
        <begin position="96"/>
        <end position="103"/>
    </location>
</feature>
<feature type="disulfide bond" evidence="1 3">
    <location>
        <begin position="151"/>
        <end position="234"/>
    </location>
</feature>
<feature type="disulfide bond" evidence="1 3">
    <location>
        <begin position="156"/>
        <end position="217"/>
    </location>
</feature>
<feature type="disulfide bond" evidence="1 3">
    <location>
        <begin position="164"/>
        <end position="180"/>
    </location>
</feature>
<feature type="disulfide bond" evidence="1 3">
    <location>
        <begin position="184"/>
        <end position="193"/>
    </location>
</feature>
<feature type="disulfide bond" evidence="1 3">
    <location>
        <begin position="194"/>
        <end position="204"/>
    </location>
</feature>
<evidence type="ECO:0000250" key="1">
    <source>
        <dbReference type="UniProtKB" id="P02883"/>
    </source>
</evidence>
<evidence type="ECO:0000255" key="2"/>
<evidence type="ECO:0000255" key="3">
    <source>
        <dbReference type="PROSITE-ProRule" id="PRU00699"/>
    </source>
</evidence>
<evidence type="ECO:0000269" key="4">
    <source>
    </source>
</evidence>
<evidence type="ECO:0000303" key="5">
    <source>
    </source>
</evidence>
<evidence type="ECO:0000305" key="6"/>
<evidence type="ECO:0000312" key="7">
    <source>
        <dbReference type="EMBL" id="AAM00216.1"/>
    </source>
</evidence>
<name>TLP1_PRUPE</name>
<reference evidence="6" key="1">
    <citation type="journal article" date="2002" name="J. Exp. Bot.">
        <title>Ethylene-responsive genes are differentially regulated during abscission, organ senescence and wounding in peach (Prunus persica).</title>
        <authorList>
            <person name="Ruperti B."/>
            <person name="Cattivelli L."/>
            <person name="Pagni S."/>
            <person name="Ramina A."/>
        </authorList>
    </citation>
    <scope>NUCLEOTIDE SEQUENCE [MRNA]</scope>
    <scope>TISSUE SPECIFICITY</scope>
    <scope>DEVELOPMENTAL STAGE</scope>
    <scope>INDUCTION</scope>
    <source>
        <strain>cv. Springcrest</strain>
        <tissue>Abscission zone</tissue>
    </source>
</reference>
<dbReference type="EMBL" id="AF362988">
    <property type="protein sequence ID" value="AAM00216.1"/>
    <property type="molecule type" value="mRNA"/>
</dbReference>
<dbReference type="SMR" id="P83332"/>
<dbReference type="Allergome" id="5977">
    <property type="allergen name" value="Pru p 2"/>
</dbReference>
<dbReference type="eggNOG" id="ENOG502QQ6D">
    <property type="taxonomic scope" value="Eukaryota"/>
</dbReference>
<dbReference type="GO" id="GO:0005576">
    <property type="term" value="C:extracellular region"/>
    <property type="evidence" value="ECO:0007669"/>
    <property type="project" value="UniProtKB-SubCell"/>
</dbReference>
<dbReference type="GO" id="GO:0006952">
    <property type="term" value="P:defense response"/>
    <property type="evidence" value="ECO:0000270"/>
    <property type="project" value="UniProtKB"/>
</dbReference>
<dbReference type="CDD" id="cd09218">
    <property type="entry name" value="TLP-PA"/>
    <property type="match status" value="1"/>
</dbReference>
<dbReference type="FunFam" id="2.60.110.10:FF:000002">
    <property type="entry name" value="Thaumatin-like protein 1a"/>
    <property type="match status" value="1"/>
</dbReference>
<dbReference type="Gene3D" id="2.60.110.10">
    <property type="entry name" value="Thaumatin"/>
    <property type="match status" value="1"/>
</dbReference>
<dbReference type="InterPro" id="IPR037176">
    <property type="entry name" value="Osmotin/thaumatin-like_sf"/>
</dbReference>
<dbReference type="InterPro" id="IPR001938">
    <property type="entry name" value="Thaumatin"/>
</dbReference>
<dbReference type="InterPro" id="IPR017949">
    <property type="entry name" value="Thaumatin_CS"/>
</dbReference>
<dbReference type="PANTHER" id="PTHR31048">
    <property type="entry name" value="OS03G0233200 PROTEIN"/>
    <property type="match status" value="1"/>
</dbReference>
<dbReference type="Pfam" id="PF00314">
    <property type="entry name" value="Thaumatin"/>
    <property type="match status" value="1"/>
</dbReference>
<dbReference type="PIRSF" id="PIRSF002703">
    <property type="entry name" value="Thaumatin"/>
    <property type="match status" value="1"/>
</dbReference>
<dbReference type="PRINTS" id="PR00347">
    <property type="entry name" value="THAUMATIN"/>
</dbReference>
<dbReference type="SMART" id="SM00205">
    <property type="entry name" value="THN"/>
    <property type="match status" value="1"/>
</dbReference>
<dbReference type="SUPFAM" id="SSF49870">
    <property type="entry name" value="Osmotin, thaumatin-like protein"/>
    <property type="match status" value="1"/>
</dbReference>
<dbReference type="PROSITE" id="PS00316">
    <property type="entry name" value="THAUMATIN_1"/>
    <property type="match status" value="1"/>
</dbReference>
<dbReference type="PROSITE" id="PS51367">
    <property type="entry name" value="THAUMATIN_2"/>
    <property type="match status" value="1"/>
</dbReference>
<proteinExistence type="evidence at transcript level"/>
<organism evidence="7">
    <name type="scientific">Prunus persica</name>
    <name type="common">Peach</name>
    <name type="synonym">Amygdalus persica</name>
    <dbReference type="NCBI Taxonomy" id="3760"/>
    <lineage>
        <taxon>Eukaryota</taxon>
        <taxon>Viridiplantae</taxon>
        <taxon>Streptophyta</taxon>
        <taxon>Embryophyta</taxon>
        <taxon>Tracheophyta</taxon>
        <taxon>Spermatophyta</taxon>
        <taxon>Magnoliopsida</taxon>
        <taxon>eudicotyledons</taxon>
        <taxon>Gunneridae</taxon>
        <taxon>Pentapetalae</taxon>
        <taxon>rosids</taxon>
        <taxon>fabids</taxon>
        <taxon>Rosales</taxon>
        <taxon>Rosaceae</taxon>
        <taxon>Amygdaloideae</taxon>
        <taxon>Amygdaleae</taxon>
        <taxon>Prunus</taxon>
    </lineage>
</organism>
<sequence length="246" mass="25765">MMKSQAALLGLTTLAILFFSGAHAAKITFTNKCSYTVWPGTLTGDQKPQLSLTGFELATGISRSVDAPSPWSGRFFGRTRCSTDASGKFTCATADCGSGQVSCNGNGAAPPATLVEITIASNGGQDFYDVSLVDGFNLPMSVAPQGGTGKCKASTCPADINKVCPAPLQVKGSDGSVIACKSACLAFNQPKYCCTPPNDKPETCPPPDYSKLFKTQCPQAYSYAYDDKSSTFTCSGRPAYLITFCP</sequence>
<comment type="function">
    <text evidence="5">May be involved in protecting plant tissues from pathogen infection.</text>
</comment>
<comment type="subcellular location">
    <subcellularLocation>
        <location evidence="6">Secreted</location>
    </subcellularLocation>
</comment>
<comment type="tissue specificity">
    <text evidence="4">Equally expressed in the abscission zone and surrounding tissues of both fruitlets and leaves.</text>
</comment>
<comment type="developmental stage">
    <text evidence="4">Expressed during fruit ripening but absent in senescent leaves.</text>
</comment>
<comment type="induction">
    <text evidence="4">Up-regulated in a tissue-independent manner following treatment with propylene and wounding due to embryoctomy.</text>
</comment>
<comment type="similarity">
    <text evidence="1 3">Belongs to the thaumatin family.</text>
</comment>
<protein>
    <recommendedName>
        <fullName>Thaumatin-like protein 1</fullName>
    </recommendedName>
    <alternativeName>
        <fullName>PpAZ44</fullName>
    </alternativeName>
</protein>
<keyword id="KW-1015">Disulfide bond</keyword>
<keyword id="KW-0611">Plant defense</keyword>
<keyword id="KW-0964">Secreted</keyword>
<keyword id="KW-0732">Signal</keyword>
<accession>P83332</accession>